<keyword id="KW-0067">ATP-binding</keyword>
<keyword id="KW-0436">Ligase</keyword>
<keyword id="KW-0547">Nucleotide-binding</keyword>
<keyword id="KW-0648">Protein biosynthesis</keyword>
<keyword id="KW-1185">Reference proteome</keyword>
<proteinExistence type="inferred from homology"/>
<sequence>MAYEEYLKDFLEISNITVGDTVKVTKPHIEHEGMLLEKPDYSNENTIILKLDSGYNIGIDIKDAKIEKISEGKKPQIELDPVDKKISDKKKNLSILSTGGTVASVIDYKTGAVHPAFTADDLLRATPELVDYANINAKAIFNILSENMTPEYWKKTATTIYDEINNGADGIIIAHGTDTMHYTASALSFMIDSPVPIVLTGAQRSSDRPSSDAFTNLMASVNAAKSDIAEVTICMHGTEDDSYCDLHRGTRARKMHTSRRDTFTSINMNPLARIENNKVTINDTQVKYTKRNEKELSLNTNLADKVALIKMYPGISPEIIDIYVDKNYDGIVIEGTGLGHCSDDVITSITRATSEDIPVVMTSQCLFGRTNMNVYSSGRRLLQNNVIGVGDMLPETAYTKLLWAAGQTDNVSEIYEIMKTNLKGEMDTTLSQNYFIKN</sequence>
<accession>Q2NEH1</accession>
<organism>
    <name type="scientific">Methanosphaera stadtmanae (strain ATCC 43021 / DSM 3091 / JCM 11832 / MCB-3)</name>
    <dbReference type="NCBI Taxonomy" id="339860"/>
    <lineage>
        <taxon>Archaea</taxon>
        <taxon>Methanobacteriati</taxon>
        <taxon>Methanobacteriota</taxon>
        <taxon>Methanomada group</taxon>
        <taxon>Methanobacteria</taxon>
        <taxon>Methanobacteriales</taxon>
        <taxon>Methanobacteriaceae</taxon>
        <taxon>Methanosphaera</taxon>
    </lineage>
</organism>
<feature type="chain" id="PRO_1000025460" description="Glutamyl-tRNA(Gln) amidotransferase subunit D">
    <location>
        <begin position="1"/>
        <end position="438"/>
    </location>
</feature>
<feature type="domain" description="Asparaginase/glutaminase" evidence="2">
    <location>
        <begin position="91"/>
        <end position="421"/>
    </location>
</feature>
<feature type="active site" evidence="1">
    <location>
        <position position="101"/>
    </location>
</feature>
<feature type="active site" evidence="1">
    <location>
        <position position="177"/>
    </location>
</feature>
<feature type="active site" evidence="1">
    <location>
        <position position="178"/>
    </location>
</feature>
<feature type="active site" evidence="1">
    <location>
        <position position="254"/>
    </location>
</feature>
<protein>
    <recommendedName>
        <fullName evidence="1">Glutamyl-tRNA(Gln) amidotransferase subunit D</fullName>
        <shortName evidence="1">Glu-ADT subunit D</shortName>
        <ecNumber evidence="1">6.3.5.-</ecNumber>
    </recommendedName>
</protein>
<comment type="function">
    <text evidence="1">Allows the formation of correctly charged Gln-tRNA(Gln) through the transamidation of misacylated Glu-tRNA(Gln) in organisms which lack glutaminyl-tRNA synthetase. The reaction takes place in the presence of glutamine and ATP through an activated gamma-phospho-Glu-tRNA(Gln). The GatDE system is specific for glutamate and does not act on aspartate.</text>
</comment>
<comment type="catalytic activity">
    <reaction evidence="1">
        <text>L-glutamyl-tRNA(Gln) + L-glutamine + ATP + H2O = L-glutaminyl-tRNA(Gln) + L-glutamate + ADP + phosphate + H(+)</text>
        <dbReference type="Rhea" id="RHEA:17521"/>
        <dbReference type="Rhea" id="RHEA-COMP:9681"/>
        <dbReference type="Rhea" id="RHEA-COMP:9684"/>
        <dbReference type="ChEBI" id="CHEBI:15377"/>
        <dbReference type="ChEBI" id="CHEBI:15378"/>
        <dbReference type="ChEBI" id="CHEBI:29985"/>
        <dbReference type="ChEBI" id="CHEBI:30616"/>
        <dbReference type="ChEBI" id="CHEBI:43474"/>
        <dbReference type="ChEBI" id="CHEBI:58359"/>
        <dbReference type="ChEBI" id="CHEBI:78520"/>
        <dbReference type="ChEBI" id="CHEBI:78521"/>
        <dbReference type="ChEBI" id="CHEBI:456216"/>
    </reaction>
</comment>
<comment type="subunit">
    <text evidence="1">Heterodimer of GatD and GatE.</text>
</comment>
<comment type="similarity">
    <text evidence="1">Belongs to the asparaginase 1 family. GatD subfamily.</text>
</comment>
<gene>
    <name evidence="1" type="primary">gatD</name>
    <name type="ordered locus">Msp_1411</name>
</gene>
<reference key="1">
    <citation type="journal article" date="2006" name="J. Bacteriol.">
        <title>The genome sequence of Methanosphaera stadtmanae reveals why this human intestinal archaeon is restricted to methanol and H2 for methane formation and ATP synthesis.</title>
        <authorList>
            <person name="Fricke W.F."/>
            <person name="Seedorf H."/>
            <person name="Henne A."/>
            <person name="Kruer M."/>
            <person name="Liesegang H."/>
            <person name="Hedderich R."/>
            <person name="Gottschalk G."/>
            <person name="Thauer R.K."/>
        </authorList>
    </citation>
    <scope>NUCLEOTIDE SEQUENCE [LARGE SCALE GENOMIC DNA]</scope>
    <source>
        <strain>ATCC 43021 / DSM 3091 / JCM 11832 / MCB-3</strain>
    </source>
</reference>
<evidence type="ECO:0000255" key="1">
    <source>
        <dbReference type="HAMAP-Rule" id="MF_00586"/>
    </source>
</evidence>
<evidence type="ECO:0000255" key="2">
    <source>
        <dbReference type="PROSITE-ProRule" id="PRU01068"/>
    </source>
</evidence>
<name>GATD_METST</name>
<dbReference type="EC" id="6.3.5.-" evidence="1"/>
<dbReference type="EMBL" id="CP000102">
    <property type="protein sequence ID" value="ABC57782.1"/>
    <property type="molecule type" value="Genomic_DNA"/>
</dbReference>
<dbReference type="RefSeq" id="WP_011406981.1">
    <property type="nucleotide sequence ID" value="NC_007681.1"/>
</dbReference>
<dbReference type="SMR" id="Q2NEH1"/>
<dbReference type="STRING" id="339860.Msp_1411"/>
<dbReference type="GeneID" id="41325984"/>
<dbReference type="KEGG" id="mst:Msp_1411"/>
<dbReference type="eggNOG" id="arCOG01924">
    <property type="taxonomic scope" value="Archaea"/>
</dbReference>
<dbReference type="HOGENOM" id="CLU_019134_2_1_2"/>
<dbReference type="OrthoDB" id="371959at2157"/>
<dbReference type="Proteomes" id="UP000001931">
    <property type="component" value="Chromosome"/>
</dbReference>
<dbReference type="GO" id="GO:0004067">
    <property type="term" value="F:asparaginase activity"/>
    <property type="evidence" value="ECO:0007669"/>
    <property type="project" value="InterPro"/>
</dbReference>
<dbReference type="GO" id="GO:0005524">
    <property type="term" value="F:ATP binding"/>
    <property type="evidence" value="ECO:0007669"/>
    <property type="project" value="UniProtKB-KW"/>
</dbReference>
<dbReference type="GO" id="GO:0050567">
    <property type="term" value="F:glutaminyl-tRNA synthase (glutamine-hydrolyzing) activity"/>
    <property type="evidence" value="ECO:0007669"/>
    <property type="project" value="UniProtKB-UniRule"/>
</dbReference>
<dbReference type="GO" id="GO:0006520">
    <property type="term" value="P:amino acid metabolic process"/>
    <property type="evidence" value="ECO:0007669"/>
    <property type="project" value="InterPro"/>
</dbReference>
<dbReference type="GO" id="GO:0006450">
    <property type="term" value="P:regulation of translational fidelity"/>
    <property type="evidence" value="ECO:0007669"/>
    <property type="project" value="InterPro"/>
</dbReference>
<dbReference type="GO" id="GO:0006412">
    <property type="term" value="P:translation"/>
    <property type="evidence" value="ECO:0007669"/>
    <property type="project" value="UniProtKB-UniRule"/>
</dbReference>
<dbReference type="CDD" id="cd08962">
    <property type="entry name" value="GatD"/>
    <property type="match status" value="1"/>
</dbReference>
<dbReference type="FunFam" id="3.40.50.1170:FF:000001">
    <property type="entry name" value="L-asparaginase 2"/>
    <property type="match status" value="1"/>
</dbReference>
<dbReference type="Gene3D" id="2.30.30.520">
    <property type="match status" value="1"/>
</dbReference>
<dbReference type="Gene3D" id="3.40.50.40">
    <property type="match status" value="1"/>
</dbReference>
<dbReference type="Gene3D" id="3.40.50.1170">
    <property type="entry name" value="L-asparaginase, N-terminal domain"/>
    <property type="match status" value="1"/>
</dbReference>
<dbReference type="HAMAP" id="MF_00586">
    <property type="entry name" value="GatD"/>
    <property type="match status" value="1"/>
</dbReference>
<dbReference type="InterPro" id="IPR006033">
    <property type="entry name" value="AsnA_fam"/>
</dbReference>
<dbReference type="InterPro" id="IPR036152">
    <property type="entry name" value="Asp/glu_Ase-like_sf"/>
</dbReference>
<dbReference type="InterPro" id="IPR006034">
    <property type="entry name" value="Asparaginase/glutaminase-like"/>
</dbReference>
<dbReference type="InterPro" id="IPR027475">
    <property type="entry name" value="Asparaginase/glutaminase_AS2"/>
</dbReference>
<dbReference type="InterPro" id="IPR040919">
    <property type="entry name" value="Asparaginase_C"/>
</dbReference>
<dbReference type="InterPro" id="IPR011878">
    <property type="entry name" value="GatD"/>
</dbReference>
<dbReference type="InterPro" id="IPR040918">
    <property type="entry name" value="GatD_N"/>
</dbReference>
<dbReference type="InterPro" id="IPR037222">
    <property type="entry name" value="GatD_N_sf"/>
</dbReference>
<dbReference type="InterPro" id="IPR027473">
    <property type="entry name" value="L-asparaginase_C"/>
</dbReference>
<dbReference type="InterPro" id="IPR027474">
    <property type="entry name" value="L-asparaginase_N"/>
</dbReference>
<dbReference type="InterPro" id="IPR037152">
    <property type="entry name" value="L-asparaginase_N_sf"/>
</dbReference>
<dbReference type="NCBIfam" id="TIGR00519">
    <property type="entry name" value="asnASE_I"/>
    <property type="match status" value="1"/>
</dbReference>
<dbReference type="NCBIfam" id="TIGR02153">
    <property type="entry name" value="gatD_arch"/>
    <property type="match status" value="1"/>
</dbReference>
<dbReference type="NCBIfam" id="NF003217">
    <property type="entry name" value="PRK04183.1"/>
    <property type="match status" value="1"/>
</dbReference>
<dbReference type="PANTHER" id="PTHR11707:SF28">
    <property type="entry name" value="60 KDA LYSOPHOSPHOLIPASE"/>
    <property type="match status" value="1"/>
</dbReference>
<dbReference type="PANTHER" id="PTHR11707">
    <property type="entry name" value="L-ASPARAGINASE"/>
    <property type="match status" value="1"/>
</dbReference>
<dbReference type="Pfam" id="PF00710">
    <property type="entry name" value="Asparaginase"/>
    <property type="match status" value="1"/>
</dbReference>
<dbReference type="Pfam" id="PF17763">
    <property type="entry name" value="Asparaginase_C"/>
    <property type="match status" value="1"/>
</dbReference>
<dbReference type="Pfam" id="PF18195">
    <property type="entry name" value="GatD_N"/>
    <property type="match status" value="1"/>
</dbReference>
<dbReference type="PIRSF" id="PIRSF500175">
    <property type="entry name" value="Glu_ADT_D"/>
    <property type="match status" value="1"/>
</dbReference>
<dbReference type="PIRSF" id="PIRSF001220">
    <property type="entry name" value="L-ASNase_gatD"/>
    <property type="match status" value="1"/>
</dbReference>
<dbReference type="PRINTS" id="PR00139">
    <property type="entry name" value="ASNGLNASE"/>
</dbReference>
<dbReference type="SFLD" id="SFLDS00057">
    <property type="entry name" value="Glutaminase/Asparaginase"/>
    <property type="match status" value="1"/>
</dbReference>
<dbReference type="SMART" id="SM00870">
    <property type="entry name" value="Asparaginase"/>
    <property type="match status" value="1"/>
</dbReference>
<dbReference type="SUPFAM" id="SSF141300">
    <property type="entry name" value="GatD N-terminal domain-like"/>
    <property type="match status" value="1"/>
</dbReference>
<dbReference type="SUPFAM" id="SSF53774">
    <property type="entry name" value="Glutaminase/Asparaginase"/>
    <property type="match status" value="1"/>
</dbReference>
<dbReference type="PROSITE" id="PS00144">
    <property type="entry name" value="ASN_GLN_ASE_1"/>
    <property type="match status" value="1"/>
</dbReference>
<dbReference type="PROSITE" id="PS00917">
    <property type="entry name" value="ASN_GLN_ASE_2"/>
    <property type="match status" value="1"/>
</dbReference>
<dbReference type="PROSITE" id="PS51732">
    <property type="entry name" value="ASN_GLN_ASE_3"/>
    <property type="match status" value="1"/>
</dbReference>